<gene>
    <name evidence="1" type="primary">aroC</name>
    <name type="ordered locus">azo1036</name>
</gene>
<keyword id="KW-0028">Amino-acid biosynthesis</keyword>
<keyword id="KW-0057">Aromatic amino acid biosynthesis</keyword>
<keyword id="KW-0274">FAD</keyword>
<keyword id="KW-0285">Flavoprotein</keyword>
<keyword id="KW-0288">FMN</keyword>
<keyword id="KW-0456">Lyase</keyword>
<keyword id="KW-0521">NADP</keyword>
<keyword id="KW-1185">Reference proteome</keyword>
<proteinExistence type="inferred from homology"/>
<protein>
    <recommendedName>
        <fullName evidence="1">Chorismate synthase</fullName>
        <shortName evidence="1">CS</shortName>
        <ecNumber evidence="1">4.2.3.5</ecNumber>
    </recommendedName>
    <alternativeName>
        <fullName evidence="1">5-enolpyruvylshikimate-3-phosphate phospholyase</fullName>
    </alternativeName>
</protein>
<name>AROC_AZOSB</name>
<organism>
    <name type="scientific">Azoarcus sp. (strain BH72)</name>
    <dbReference type="NCBI Taxonomy" id="418699"/>
    <lineage>
        <taxon>Bacteria</taxon>
        <taxon>Pseudomonadati</taxon>
        <taxon>Pseudomonadota</taxon>
        <taxon>Betaproteobacteria</taxon>
        <taxon>Rhodocyclales</taxon>
        <taxon>Zoogloeaceae</taxon>
        <taxon>Azoarcus</taxon>
    </lineage>
</organism>
<accession>A1K498</accession>
<feature type="chain" id="PRO_1000022458" description="Chorismate synthase">
    <location>
        <begin position="1"/>
        <end position="378"/>
    </location>
</feature>
<feature type="binding site" evidence="1">
    <location>
        <position position="48"/>
    </location>
    <ligand>
        <name>NADP(+)</name>
        <dbReference type="ChEBI" id="CHEBI:58349"/>
    </ligand>
</feature>
<feature type="binding site" evidence="1">
    <location>
        <position position="54"/>
    </location>
    <ligand>
        <name>NADP(+)</name>
        <dbReference type="ChEBI" id="CHEBI:58349"/>
    </ligand>
</feature>
<feature type="binding site" evidence="1">
    <location>
        <begin position="125"/>
        <end position="127"/>
    </location>
    <ligand>
        <name>FMN</name>
        <dbReference type="ChEBI" id="CHEBI:58210"/>
    </ligand>
</feature>
<feature type="binding site" evidence="1">
    <location>
        <begin position="238"/>
        <end position="239"/>
    </location>
    <ligand>
        <name>FMN</name>
        <dbReference type="ChEBI" id="CHEBI:58210"/>
    </ligand>
</feature>
<feature type="binding site" evidence="1">
    <location>
        <position position="278"/>
    </location>
    <ligand>
        <name>FMN</name>
        <dbReference type="ChEBI" id="CHEBI:58210"/>
    </ligand>
</feature>
<feature type="binding site" evidence="1">
    <location>
        <begin position="293"/>
        <end position="297"/>
    </location>
    <ligand>
        <name>FMN</name>
        <dbReference type="ChEBI" id="CHEBI:58210"/>
    </ligand>
</feature>
<feature type="binding site" evidence="1">
    <location>
        <position position="319"/>
    </location>
    <ligand>
        <name>FMN</name>
        <dbReference type="ChEBI" id="CHEBI:58210"/>
    </ligand>
</feature>
<evidence type="ECO:0000255" key="1">
    <source>
        <dbReference type="HAMAP-Rule" id="MF_00300"/>
    </source>
</evidence>
<dbReference type="EC" id="4.2.3.5" evidence="1"/>
<dbReference type="EMBL" id="AM406670">
    <property type="protein sequence ID" value="CAL93653.1"/>
    <property type="molecule type" value="Genomic_DNA"/>
</dbReference>
<dbReference type="RefSeq" id="WP_011764770.1">
    <property type="nucleotide sequence ID" value="NC_008702.1"/>
</dbReference>
<dbReference type="SMR" id="A1K498"/>
<dbReference type="STRING" id="62928.azo1036"/>
<dbReference type="KEGG" id="azo:azo1036"/>
<dbReference type="eggNOG" id="COG0082">
    <property type="taxonomic scope" value="Bacteria"/>
</dbReference>
<dbReference type="HOGENOM" id="CLU_034547_0_2_4"/>
<dbReference type="UniPathway" id="UPA00053">
    <property type="reaction ID" value="UER00090"/>
</dbReference>
<dbReference type="Proteomes" id="UP000002588">
    <property type="component" value="Chromosome"/>
</dbReference>
<dbReference type="GO" id="GO:0005829">
    <property type="term" value="C:cytosol"/>
    <property type="evidence" value="ECO:0007669"/>
    <property type="project" value="TreeGrafter"/>
</dbReference>
<dbReference type="GO" id="GO:0004107">
    <property type="term" value="F:chorismate synthase activity"/>
    <property type="evidence" value="ECO:0007669"/>
    <property type="project" value="UniProtKB-UniRule"/>
</dbReference>
<dbReference type="GO" id="GO:0010181">
    <property type="term" value="F:FMN binding"/>
    <property type="evidence" value="ECO:0007669"/>
    <property type="project" value="TreeGrafter"/>
</dbReference>
<dbReference type="GO" id="GO:0008652">
    <property type="term" value="P:amino acid biosynthetic process"/>
    <property type="evidence" value="ECO:0007669"/>
    <property type="project" value="UniProtKB-KW"/>
</dbReference>
<dbReference type="GO" id="GO:0009073">
    <property type="term" value="P:aromatic amino acid family biosynthetic process"/>
    <property type="evidence" value="ECO:0007669"/>
    <property type="project" value="UniProtKB-KW"/>
</dbReference>
<dbReference type="GO" id="GO:0009423">
    <property type="term" value="P:chorismate biosynthetic process"/>
    <property type="evidence" value="ECO:0007669"/>
    <property type="project" value="UniProtKB-UniRule"/>
</dbReference>
<dbReference type="CDD" id="cd07304">
    <property type="entry name" value="Chorismate_synthase"/>
    <property type="match status" value="1"/>
</dbReference>
<dbReference type="FunFam" id="3.60.150.10:FF:000001">
    <property type="entry name" value="Chorismate synthase"/>
    <property type="match status" value="1"/>
</dbReference>
<dbReference type="Gene3D" id="3.60.150.10">
    <property type="entry name" value="Chorismate synthase AroC"/>
    <property type="match status" value="1"/>
</dbReference>
<dbReference type="HAMAP" id="MF_00300">
    <property type="entry name" value="Chorismate_synth"/>
    <property type="match status" value="1"/>
</dbReference>
<dbReference type="InterPro" id="IPR000453">
    <property type="entry name" value="Chorismate_synth"/>
</dbReference>
<dbReference type="InterPro" id="IPR035904">
    <property type="entry name" value="Chorismate_synth_AroC_sf"/>
</dbReference>
<dbReference type="InterPro" id="IPR020541">
    <property type="entry name" value="Chorismate_synthase_CS"/>
</dbReference>
<dbReference type="NCBIfam" id="TIGR00033">
    <property type="entry name" value="aroC"/>
    <property type="match status" value="1"/>
</dbReference>
<dbReference type="NCBIfam" id="NF003793">
    <property type="entry name" value="PRK05382.1"/>
    <property type="match status" value="1"/>
</dbReference>
<dbReference type="PANTHER" id="PTHR21085">
    <property type="entry name" value="CHORISMATE SYNTHASE"/>
    <property type="match status" value="1"/>
</dbReference>
<dbReference type="PANTHER" id="PTHR21085:SF0">
    <property type="entry name" value="CHORISMATE SYNTHASE"/>
    <property type="match status" value="1"/>
</dbReference>
<dbReference type="Pfam" id="PF01264">
    <property type="entry name" value="Chorismate_synt"/>
    <property type="match status" value="1"/>
</dbReference>
<dbReference type="PIRSF" id="PIRSF001456">
    <property type="entry name" value="Chorismate_synth"/>
    <property type="match status" value="1"/>
</dbReference>
<dbReference type="SUPFAM" id="SSF103263">
    <property type="entry name" value="Chorismate synthase, AroC"/>
    <property type="match status" value="1"/>
</dbReference>
<dbReference type="PROSITE" id="PS00787">
    <property type="entry name" value="CHORISMATE_SYNTHASE_1"/>
    <property type="match status" value="1"/>
</dbReference>
<dbReference type="PROSITE" id="PS00788">
    <property type="entry name" value="CHORISMATE_SYNTHASE_2"/>
    <property type="match status" value="1"/>
</dbReference>
<dbReference type="PROSITE" id="PS00789">
    <property type="entry name" value="CHORISMATE_SYNTHASE_3"/>
    <property type="match status" value="1"/>
</dbReference>
<sequence>MSGNTLGTLFCVTSFGESHGPAIGCVIDGCPPGLSLTAADIQGELDRRKPGTSRHVTQRREPDEVEILSGVFEGVTTGTPIALLIRNQDQRSKDYGNIAETFRPGHADYPYWQKYGIRDYRGGGRSSARETAVRVAAGAVARKWLSERYGIVIRGYMAQLGPLPIPFVSWDAVGDNPFFAPNAEIVPQLESYMDELRKSGDSVGARINVVASGVPVGWGEPVYDRLDADIAYAMMSINAVKGVEIGAGFASVAQLGTEHGDELTPEGFLSNNAGGVLGGISSGQDVLVSMAIKPTSSIRLDRRSIDREGNPVIVNTHGRHDPCVGIRATPVAEAMLALVLMDHALRHRAQCGDVRTATPQIAALAPEGVQAVPSPRAE</sequence>
<reference key="1">
    <citation type="journal article" date="2006" name="Nat. Biotechnol.">
        <title>Complete genome of the mutualistic, N2-fixing grass endophyte Azoarcus sp. strain BH72.</title>
        <authorList>
            <person name="Krause A."/>
            <person name="Ramakumar A."/>
            <person name="Bartels D."/>
            <person name="Battistoni F."/>
            <person name="Bekel T."/>
            <person name="Boch J."/>
            <person name="Boehm M."/>
            <person name="Friedrich F."/>
            <person name="Hurek T."/>
            <person name="Krause L."/>
            <person name="Linke B."/>
            <person name="McHardy A.C."/>
            <person name="Sarkar A."/>
            <person name="Schneiker S."/>
            <person name="Syed A.A."/>
            <person name="Thauer R."/>
            <person name="Vorhoelter F.-J."/>
            <person name="Weidner S."/>
            <person name="Puehler A."/>
            <person name="Reinhold-Hurek B."/>
            <person name="Kaiser O."/>
            <person name="Goesmann A."/>
        </authorList>
    </citation>
    <scope>NUCLEOTIDE SEQUENCE [LARGE SCALE GENOMIC DNA]</scope>
    <source>
        <strain>BH72</strain>
    </source>
</reference>
<comment type="function">
    <text evidence="1">Catalyzes the anti-1,4-elimination of the C-3 phosphate and the C-6 proR hydrogen from 5-enolpyruvylshikimate-3-phosphate (EPSP) to yield chorismate, which is the branch point compound that serves as the starting substrate for the three terminal pathways of aromatic amino acid biosynthesis. This reaction introduces a second double bond into the aromatic ring system.</text>
</comment>
<comment type="catalytic activity">
    <reaction evidence="1">
        <text>5-O-(1-carboxyvinyl)-3-phosphoshikimate = chorismate + phosphate</text>
        <dbReference type="Rhea" id="RHEA:21020"/>
        <dbReference type="ChEBI" id="CHEBI:29748"/>
        <dbReference type="ChEBI" id="CHEBI:43474"/>
        <dbReference type="ChEBI" id="CHEBI:57701"/>
        <dbReference type="EC" id="4.2.3.5"/>
    </reaction>
</comment>
<comment type="cofactor">
    <cofactor evidence="1">
        <name>FMNH2</name>
        <dbReference type="ChEBI" id="CHEBI:57618"/>
    </cofactor>
    <text evidence="1">Reduced FMN (FMNH(2)).</text>
</comment>
<comment type="pathway">
    <text evidence="1">Metabolic intermediate biosynthesis; chorismate biosynthesis; chorismate from D-erythrose 4-phosphate and phosphoenolpyruvate: step 7/7.</text>
</comment>
<comment type="subunit">
    <text evidence="1">Homotetramer.</text>
</comment>
<comment type="similarity">
    <text evidence="1">Belongs to the chorismate synthase family.</text>
</comment>